<organism>
    <name type="scientific">Psychromonas ingrahamii (strain DSM 17664 / CCUG 51855 / 37)</name>
    <dbReference type="NCBI Taxonomy" id="357804"/>
    <lineage>
        <taxon>Bacteria</taxon>
        <taxon>Pseudomonadati</taxon>
        <taxon>Pseudomonadota</taxon>
        <taxon>Gammaproteobacteria</taxon>
        <taxon>Alteromonadales</taxon>
        <taxon>Psychromonadaceae</taxon>
        <taxon>Psychromonas</taxon>
    </lineage>
</organism>
<comment type="function">
    <text evidence="1">The RuvA-RuvB-RuvC complex processes Holliday junction (HJ) DNA during genetic recombination and DNA repair, while the RuvA-RuvB complex plays an important role in the rescue of blocked DNA replication forks via replication fork reversal (RFR). RuvA specifically binds to HJ cruciform DNA, conferring on it an open structure. The RuvB hexamer acts as an ATP-dependent pump, pulling dsDNA into and through the RuvAB complex. RuvB forms 2 homohexamers on either side of HJ DNA bound by 1 or 2 RuvA tetramers; 4 subunits per hexamer contact DNA at a time. Coordinated motions by a converter formed by DNA-disengaged RuvB subunits stimulates ATP hydrolysis and nucleotide exchange. Immobilization of the converter enables RuvB to convert the ATP-contained energy into a lever motion, pulling 2 nucleotides of DNA out of the RuvA tetramer per ATP hydrolyzed, thus driving DNA branch migration. The RuvB motors rotate together with the DNA substrate, which together with the progressing nucleotide cycle form the mechanistic basis for DNA recombination by continuous HJ branch migration. Branch migration allows RuvC to scan DNA until it finds its consensus sequence, where it cleaves and resolves cruciform DNA.</text>
</comment>
<comment type="catalytic activity">
    <reaction evidence="1">
        <text>ATP + H2O = ADP + phosphate + H(+)</text>
        <dbReference type="Rhea" id="RHEA:13065"/>
        <dbReference type="ChEBI" id="CHEBI:15377"/>
        <dbReference type="ChEBI" id="CHEBI:15378"/>
        <dbReference type="ChEBI" id="CHEBI:30616"/>
        <dbReference type="ChEBI" id="CHEBI:43474"/>
        <dbReference type="ChEBI" id="CHEBI:456216"/>
    </reaction>
</comment>
<comment type="subunit">
    <text evidence="1">Homohexamer. Forms an RuvA(8)-RuvB(12)-Holliday junction (HJ) complex. HJ DNA is sandwiched between 2 RuvA tetramers; dsDNA enters through RuvA and exits via RuvB. An RuvB hexamer assembles on each DNA strand where it exits the tetramer. Each RuvB hexamer is contacted by two RuvA subunits (via domain III) on 2 adjacent RuvB subunits; this complex drives branch migration. In the full resolvosome a probable DNA-RuvA(4)-RuvB(12)-RuvC(2) complex forms which resolves the HJ.</text>
</comment>
<comment type="subcellular location">
    <subcellularLocation>
        <location evidence="1">Cytoplasm</location>
    </subcellularLocation>
</comment>
<comment type="domain">
    <text evidence="1">Has 3 domains, the large (RuvB-L) and small ATPase (RuvB-S) domains and the C-terminal head (RuvB-H) domain. The head domain binds DNA, while the ATPase domains jointly bind ATP, ADP or are empty depending on the state of the subunit in the translocation cycle. During a single DNA translocation step the structure of each domain remains the same, but their relative positions change.</text>
</comment>
<comment type="similarity">
    <text evidence="1">Belongs to the RuvB family.</text>
</comment>
<name>RUVB_PSYIN</name>
<feature type="chain" id="PRO_1000001452" description="Holliday junction branch migration complex subunit RuvB">
    <location>
        <begin position="1"/>
        <end position="334"/>
    </location>
</feature>
<feature type="region of interest" description="Large ATPase domain (RuvB-L)" evidence="1">
    <location>
        <begin position="4"/>
        <end position="184"/>
    </location>
</feature>
<feature type="region of interest" description="Small ATPAse domain (RuvB-S)" evidence="1">
    <location>
        <begin position="185"/>
        <end position="255"/>
    </location>
</feature>
<feature type="region of interest" description="Head domain (RuvB-H)" evidence="1">
    <location>
        <begin position="258"/>
        <end position="334"/>
    </location>
</feature>
<feature type="binding site" evidence="1">
    <location>
        <position position="23"/>
    </location>
    <ligand>
        <name>ATP</name>
        <dbReference type="ChEBI" id="CHEBI:30616"/>
    </ligand>
</feature>
<feature type="binding site" evidence="1">
    <location>
        <position position="24"/>
    </location>
    <ligand>
        <name>ATP</name>
        <dbReference type="ChEBI" id="CHEBI:30616"/>
    </ligand>
</feature>
<feature type="binding site" evidence="1">
    <location>
        <position position="65"/>
    </location>
    <ligand>
        <name>ATP</name>
        <dbReference type="ChEBI" id="CHEBI:30616"/>
    </ligand>
</feature>
<feature type="binding site" evidence="1">
    <location>
        <position position="68"/>
    </location>
    <ligand>
        <name>ATP</name>
        <dbReference type="ChEBI" id="CHEBI:30616"/>
    </ligand>
</feature>
<feature type="binding site" evidence="1">
    <location>
        <position position="69"/>
    </location>
    <ligand>
        <name>ATP</name>
        <dbReference type="ChEBI" id="CHEBI:30616"/>
    </ligand>
</feature>
<feature type="binding site" evidence="1">
    <location>
        <position position="69"/>
    </location>
    <ligand>
        <name>Mg(2+)</name>
        <dbReference type="ChEBI" id="CHEBI:18420"/>
    </ligand>
</feature>
<feature type="binding site" evidence="1">
    <location>
        <position position="70"/>
    </location>
    <ligand>
        <name>ATP</name>
        <dbReference type="ChEBI" id="CHEBI:30616"/>
    </ligand>
</feature>
<feature type="binding site" evidence="1">
    <location>
        <begin position="131"/>
        <end position="133"/>
    </location>
    <ligand>
        <name>ATP</name>
        <dbReference type="ChEBI" id="CHEBI:30616"/>
    </ligand>
</feature>
<feature type="binding site" evidence="1">
    <location>
        <position position="174"/>
    </location>
    <ligand>
        <name>ATP</name>
        <dbReference type="ChEBI" id="CHEBI:30616"/>
    </ligand>
</feature>
<feature type="binding site" evidence="1">
    <location>
        <position position="184"/>
    </location>
    <ligand>
        <name>ATP</name>
        <dbReference type="ChEBI" id="CHEBI:30616"/>
    </ligand>
</feature>
<feature type="binding site" evidence="1">
    <location>
        <position position="221"/>
    </location>
    <ligand>
        <name>ATP</name>
        <dbReference type="ChEBI" id="CHEBI:30616"/>
    </ligand>
</feature>
<feature type="binding site" evidence="1">
    <location>
        <position position="313"/>
    </location>
    <ligand>
        <name>DNA</name>
        <dbReference type="ChEBI" id="CHEBI:16991"/>
    </ligand>
</feature>
<feature type="binding site" evidence="1">
    <location>
        <position position="318"/>
    </location>
    <ligand>
        <name>DNA</name>
        <dbReference type="ChEBI" id="CHEBI:16991"/>
    </ligand>
</feature>
<proteinExistence type="inferred from homology"/>
<gene>
    <name evidence="1" type="primary">ruvB</name>
    <name type="ordered locus">Ping_0719</name>
</gene>
<dbReference type="EC" id="3.6.4.-" evidence="1"/>
<dbReference type="EMBL" id="CP000510">
    <property type="protein sequence ID" value="ABM02571.1"/>
    <property type="molecule type" value="Genomic_DNA"/>
</dbReference>
<dbReference type="RefSeq" id="WP_011769130.1">
    <property type="nucleotide sequence ID" value="NC_008709.1"/>
</dbReference>
<dbReference type="SMR" id="A1SSV6"/>
<dbReference type="STRING" id="357804.Ping_0719"/>
<dbReference type="KEGG" id="pin:Ping_0719"/>
<dbReference type="eggNOG" id="COG2255">
    <property type="taxonomic scope" value="Bacteria"/>
</dbReference>
<dbReference type="HOGENOM" id="CLU_055599_1_0_6"/>
<dbReference type="OrthoDB" id="9804478at2"/>
<dbReference type="Proteomes" id="UP000000639">
    <property type="component" value="Chromosome"/>
</dbReference>
<dbReference type="GO" id="GO:0005737">
    <property type="term" value="C:cytoplasm"/>
    <property type="evidence" value="ECO:0007669"/>
    <property type="project" value="UniProtKB-SubCell"/>
</dbReference>
<dbReference type="GO" id="GO:0048476">
    <property type="term" value="C:Holliday junction resolvase complex"/>
    <property type="evidence" value="ECO:0007669"/>
    <property type="project" value="UniProtKB-UniRule"/>
</dbReference>
<dbReference type="GO" id="GO:0005524">
    <property type="term" value="F:ATP binding"/>
    <property type="evidence" value="ECO:0007669"/>
    <property type="project" value="UniProtKB-UniRule"/>
</dbReference>
<dbReference type="GO" id="GO:0016887">
    <property type="term" value="F:ATP hydrolysis activity"/>
    <property type="evidence" value="ECO:0007669"/>
    <property type="project" value="InterPro"/>
</dbReference>
<dbReference type="GO" id="GO:0000400">
    <property type="term" value="F:four-way junction DNA binding"/>
    <property type="evidence" value="ECO:0007669"/>
    <property type="project" value="UniProtKB-UniRule"/>
</dbReference>
<dbReference type="GO" id="GO:0009378">
    <property type="term" value="F:four-way junction helicase activity"/>
    <property type="evidence" value="ECO:0007669"/>
    <property type="project" value="InterPro"/>
</dbReference>
<dbReference type="GO" id="GO:0006310">
    <property type="term" value="P:DNA recombination"/>
    <property type="evidence" value="ECO:0007669"/>
    <property type="project" value="UniProtKB-UniRule"/>
</dbReference>
<dbReference type="GO" id="GO:0006281">
    <property type="term" value="P:DNA repair"/>
    <property type="evidence" value="ECO:0007669"/>
    <property type="project" value="UniProtKB-UniRule"/>
</dbReference>
<dbReference type="CDD" id="cd00009">
    <property type="entry name" value="AAA"/>
    <property type="match status" value="1"/>
</dbReference>
<dbReference type="FunFam" id="1.10.10.10:FF:000086">
    <property type="entry name" value="Holliday junction ATP-dependent DNA helicase RuvB"/>
    <property type="match status" value="1"/>
</dbReference>
<dbReference type="FunFam" id="3.40.50.300:FF:000073">
    <property type="entry name" value="Holliday junction ATP-dependent DNA helicase RuvB"/>
    <property type="match status" value="1"/>
</dbReference>
<dbReference type="Gene3D" id="1.10.8.60">
    <property type="match status" value="1"/>
</dbReference>
<dbReference type="Gene3D" id="3.40.50.300">
    <property type="entry name" value="P-loop containing nucleotide triphosphate hydrolases"/>
    <property type="match status" value="1"/>
</dbReference>
<dbReference type="Gene3D" id="1.10.10.10">
    <property type="entry name" value="Winged helix-like DNA-binding domain superfamily/Winged helix DNA-binding domain"/>
    <property type="match status" value="1"/>
</dbReference>
<dbReference type="HAMAP" id="MF_00016">
    <property type="entry name" value="DNA_HJ_migration_RuvB"/>
    <property type="match status" value="1"/>
</dbReference>
<dbReference type="InterPro" id="IPR003593">
    <property type="entry name" value="AAA+_ATPase"/>
</dbReference>
<dbReference type="InterPro" id="IPR041445">
    <property type="entry name" value="AAA_lid_4"/>
</dbReference>
<dbReference type="InterPro" id="IPR004605">
    <property type="entry name" value="DNA_helicase_Holl-junc_RuvB"/>
</dbReference>
<dbReference type="InterPro" id="IPR027417">
    <property type="entry name" value="P-loop_NTPase"/>
</dbReference>
<dbReference type="InterPro" id="IPR008824">
    <property type="entry name" value="RuvB-like_N"/>
</dbReference>
<dbReference type="InterPro" id="IPR008823">
    <property type="entry name" value="RuvB_C"/>
</dbReference>
<dbReference type="InterPro" id="IPR036388">
    <property type="entry name" value="WH-like_DNA-bd_sf"/>
</dbReference>
<dbReference type="InterPro" id="IPR036390">
    <property type="entry name" value="WH_DNA-bd_sf"/>
</dbReference>
<dbReference type="NCBIfam" id="NF000868">
    <property type="entry name" value="PRK00080.1"/>
    <property type="match status" value="1"/>
</dbReference>
<dbReference type="NCBIfam" id="TIGR00635">
    <property type="entry name" value="ruvB"/>
    <property type="match status" value="1"/>
</dbReference>
<dbReference type="PANTHER" id="PTHR42848">
    <property type="match status" value="1"/>
</dbReference>
<dbReference type="PANTHER" id="PTHR42848:SF1">
    <property type="entry name" value="HOLLIDAY JUNCTION BRANCH MIGRATION COMPLEX SUBUNIT RUVB"/>
    <property type="match status" value="1"/>
</dbReference>
<dbReference type="Pfam" id="PF17864">
    <property type="entry name" value="AAA_lid_4"/>
    <property type="match status" value="1"/>
</dbReference>
<dbReference type="Pfam" id="PF05491">
    <property type="entry name" value="RuvB_C"/>
    <property type="match status" value="1"/>
</dbReference>
<dbReference type="Pfam" id="PF05496">
    <property type="entry name" value="RuvB_N"/>
    <property type="match status" value="1"/>
</dbReference>
<dbReference type="SMART" id="SM00382">
    <property type="entry name" value="AAA"/>
    <property type="match status" value="1"/>
</dbReference>
<dbReference type="SUPFAM" id="SSF52540">
    <property type="entry name" value="P-loop containing nucleoside triphosphate hydrolases"/>
    <property type="match status" value="1"/>
</dbReference>
<dbReference type="SUPFAM" id="SSF46785">
    <property type="entry name" value="Winged helix' DNA-binding domain"/>
    <property type="match status" value="1"/>
</dbReference>
<sequence>MIDEDRLISGTQKIDENFIDRAIRPKFLADYEGQPQVNKQMEIFIEAARQRNEALDHLLIFGPPGLGKTTLSHIVANELEVNIKTTSGPILEKAGDLAALLTNLEENDVLFIDEIHRLSPVVEEILYPAMEDYQLDIMIGEGPAARSIKLDLPAFTLIGATTRAGSLTSPLRDRFGIVQRLEYYDLKSLTRIVLRSAGHFKLNMSEAGAVEIARRSRGTPRIANRLLRRVRDYAQVKKANVIDDDVAKLALDMLEVDNEGFDYMDRKLLMAILDTFMGGPVGLDNLAAAIGEEKETIEDVLEPYLIQQGFLQRTPRGRIATNRTYLHFGFDKPQ</sequence>
<accession>A1SSV6</accession>
<keyword id="KW-0067">ATP-binding</keyword>
<keyword id="KW-0963">Cytoplasm</keyword>
<keyword id="KW-0227">DNA damage</keyword>
<keyword id="KW-0233">DNA recombination</keyword>
<keyword id="KW-0234">DNA repair</keyword>
<keyword id="KW-0238">DNA-binding</keyword>
<keyword id="KW-0378">Hydrolase</keyword>
<keyword id="KW-0547">Nucleotide-binding</keyword>
<keyword id="KW-1185">Reference proteome</keyword>
<evidence type="ECO:0000255" key="1">
    <source>
        <dbReference type="HAMAP-Rule" id="MF_00016"/>
    </source>
</evidence>
<protein>
    <recommendedName>
        <fullName evidence="1">Holliday junction branch migration complex subunit RuvB</fullName>
        <ecNumber evidence="1">3.6.4.-</ecNumber>
    </recommendedName>
</protein>
<reference key="1">
    <citation type="journal article" date="2008" name="BMC Genomics">
        <title>Genomics of an extreme psychrophile, Psychromonas ingrahamii.</title>
        <authorList>
            <person name="Riley M."/>
            <person name="Staley J.T."/>
            <person name="Danchin A."/>
            <person name="Wang T.Z."/>
            <person name="Brettin T.S."/>
            <person name="Hauser L.J."/>
            <person name="Land M.L."/>
            <person name="Thompson L.S."/>
        </authorList>
    </citation>
    <scope>NUCLEOTIDE SEQUENCE [LARGE SCALE GENOMIC DNA]</scope>
    <source>
        <strain>DSM 17664 / CCUG 51855 / 37</strain>
    </source>
</reference>